<evidence type="ECO:0000255" key="1">
    <source>
        <dbReference type="HAMAP-Rule" id="MF_00171"/>
    </source>
</evidence>
<dbReference type="EC" id="5.4.99.12" evidence="1"/>
<dbReference type="EMBL" id="AE015927">
    <property type="protein sequence ID" value="AAO37030.1"/>
    <property type="molecule type" value="Genomic_DNA"/>
</dbReference>
<dbReference type="RefSeq" id="WP_011100691.1">
    <property type="nucleotide sequence ID" value="NC_004557.1"/>
</dbReference>
<dbReference type="SMR" id="Q890R5"/>
<dbReference type="STRING" id="212717.CTC_02573"/>
<dbReference type="GeneID" id="24254083"/>
<dbReference type="KEGG" id="ctc:CTC_02573"/>
<dbReference type="HOGENOM" id="CLU_014673_0_1_9"/>
<dbReference type="OrthoDB" id="9811823at2"/>
<dbReference type="Proteomes" id="UP000001412">
    <property type="component" value="Chromosome"/>
</dbReference>
<dbReference type="GO" id="GO:0003723">
    <property type="term" value="F:RNA binding"/>
    <property type="evidence" value="ECO:0007669"/>
    <property type="project" value="InterPro"/>
</dbReference>
<dbReference type="GO" id="GO:0160147">
    <property type="term" value="F:tRNA pseudouridine(38-40) synthase activity"/>
    <property type="evidence" value="ECO:0007669"/>
    <property type="project" value="UniProtKB-EC"/>
</dbReference>
<dbReference type="GO" id="GO:0031119">
    <property type="term" value="P:tRNA pseudouridine synthesis"/>
    <property type="evidence" value="ECO:0007669"/>
    <property type="project" value="UniProtKB-UniRule"/>
</dbReference>
<dbReference type="CDD" id="cd02570">
    <property type="entry name" value="PseudoU_synth_EcTruA"/>
    <property type="match status" value="1"/>
</dbReference>
<dbReference type="FunFam" id="3.30.70.580:FF:000001">
    <property type="entry name" value="tRNA pseudouridine synthase A"/>
    <property type="match status" value="1"/>
</dbReference>
<dbReference type="Gene3D" id="3.30.70.660">
    <property type="entry name" value="Pseudouridine synthase I, catalytic domain, C-terminal subdomain"/>
    <property type="match status" value="1"/>
</dbReference>
<dbReference type="Gene3D" id="3.30.70.580">
    <property type="entry name" value="Pseudouridine synthase I, catalytic domain, N-terminal subdomain"/>
    <property type="match status" value="1"/>
</dbReference>
<dbReference type="HAMAP" id="MF_00171">
    <property type="entry name" value="TruA"/>
    <property type="match status" value="1"/>
</dbReference>
<dbReference type="InterPro" id="IPR020103">
    <property type="entry name" value="PsdUridine_synth_cat_dom_sf"/>
</dbReference>
<dbReference type="InterPro" id="IPR001406">
    <property type="entry name" value="PsdUridine_synth_TruA"/>
</dbReference>
<dbReference type="InterPro" id="IPR020097">
    <property type="entry name" value="PsdUridine_synth_TruA_a/b_dom"/>
</dbReference>
<dbReference type="InterPro" id="IPR020095">
    <property type="entry name" value="PsdUridine_synth_TruA_C"/>
</dbReference>
<dbReference type="InterPro" id="IPR020094">
    <property type="entry name" value="TruA/RsuA/RluB/E/F_N"/>
</dbReference>
<dbReference type="NCBIfam" id="TIGR00071">
    <property type="entry name" value="hisT_truA"/>
    <property type="match status" value="1"/>
</dbReference>
<dbReference type="PANTHER" id="PTHR11142">
    <property type="entry name" value="PSEUDOURIDYLATE SYNTHASE"/>
    <property type="match status" value="1"/>
</dbReference>
<dbReference type="PANTHER" id="PTHR11142:SF0">
    <property type="entry name" value="TRNA PSEUDOURIDINE SYNTHASE-LIKE 1"/>
    <property type="match status" value="1"/>
</dbReference>
<dbReference type="Pfam" id="PF01416">
    <property type="entry name" value="PseudoU_synth_1"/>
    <property type="match status" value="2"/>
</dbReference>
<dbReference type="PIRSF" id="PIRSF001430">
    <property type="entry name" value="tRNA_psdUrid_synth"/>
    <property type="match status" value="1"/>
</dbReference>
<dbReference type="SUPFAM" id="SSF55120">
    <property type="entry name" value="Pseudouridine synthase"/>
    <property type="match status" value="1"/>
</dbReference>
<comment type="function">
    <text evidence="1">Formation of pseudouridine at positions 38, 39 and 40 in the anticodon stem and loop of transfer RNAs.</text>
</comment>
<comment type="catalytic activity">
    <reaction evidence="1">
        <text>uridine(38/39/40) in tRNA = pseudouridine(38/39/40) in tRNA</text>
        <dbReference type="Rhea" id="RHEA:22376"/>
        <dbReference type="Rhea" id="RHEA-COMP:10085"/>
        <dbReference type="Rhea" id="RHEA-COMP:10087"/>
        <dbReference type="ChEBI" id="CHEBI:65314"/>
        <dbReference type="ChEBI" id="CHEBI:65315"/>
        <dbReference type="EC" id="5.4.99.12"/>
    </reaction>
</comment>
<comment type="subunit">
    <text evidence="1">Homodimer.</text>
</comment>
<comment type="similarity">
    <text evidence="1">Belongs to the tRNA pseudouridine synthase TruA family.</text>
</comment>
<organism>
    <name type="scientific">Clostridium tetani (strain Massachusetts / E88)</name>
    <dbReference type="NCBI Taxonomy" id="212717"/>
    <lineage>
        <taxon>Bacteria</taxon>
        <taxon>Bacillati</taxon>
        <taxon>Bacillota</taxon>
        <taxon>Clostridia</taxon>
        <taxon>Eubacteriales</taxon>
        <taxon>Clostridiaceae</taxon>
        <taxon>Clostridium</taxon>
    </lineage>
</organism>
<sequence length="248" mass="28206">MARNVRLKVEYDGTNYSGWQKQKDKNIKTIQSSIEKAIEEATKEEVELIGSSRTDAGVHALAYTANFKTCSTIPGEKFKHALNRFLPEDIVILESEEVPMEFHSRFDCIGKTYVYKILNRPLFSPIQRNYIYHVKDELDINSMIEASKFLIGTHDFNAFKKSGGNLKTTVRTITNINILKSNDIVEIHVSGDGFLYNMVRIISGTLIEVGLSRRKPEDISIILQSKDRCKAGMCAPARGLYLKELFYN</sequence>
<keyword id="KW-0413">Isomerase</keyword>
<keyword id="KW-1185">Reference proteome</keyword>
<keyword id="KW-0819">tRNA processing</keyword>
<reference key="1">
    <citation type="journal article" date="2003" name="Proc. Natl. Acad. Sci. U.S.A.">
        <title>The genome sequence of Clostridium tetani, the causative agent of tetanus disease.</title>
        <authorList>
            <person name="Brueggemann H."/>
            <person name="Baeumer S."/>
            <person name="Fricke W.F."/>
            <person name="Wiezer A."/>
            <person name="Liesegang H."/>
            <person name="Decker I."/>
            <person name="Herzberg C."/>
            <person name="Martinez-Arias R."/>
            <person name="Merkl R."/>
            <person name="Henne A."/>
            <person name="Gottschalk G."/>
        </authorList>
    </citation>
    <scope>NUCLEOTIDE SEQUENCE [LARGE SCALE GENOMIC DNA]</scope>
    <source>
        <strain>Massachusetts / E88</strain>
    </source>
</reference>
<accession>Q890R5</accession>
<protein>
    <recommendedName>
        <fullName evidence="1">tRNA pseudouridine synthase A 2</fullName>
        <ecNumber evidence="1">5.4.99.12</ecNumber>
    </recommendedName>
    <alternativeName>
        <fullName evidence="1">tRNA pseudouridine(38-40) synthase</fullName>
    </alternativeName>
    <alternativeName>
        <fullName evidence="1">tRNA pseudouridylate synthase I 2</fullName>
    </alternativeName>
    <alternativeName>
        <fullName evidence="1">tRNA-uridine isomerase I 2</fullName>
    </alternativeName>
</protein>
<feature type="chain" id="PRO_0000057367" description="tRNA pseudouridine synthase A 2">
    <location>
        <begin position="1"/>
        <end position="248"/>
    </location>
</feature>
<feature type="active site" description="Nucleophile" evidence="1">
    <location>
        <position position="55"/>
    </location>
</feature>
<feature type="binding site" evidence="1">
    <location>
        <position position="113"/>
    </location>
    <ligand>
        <name>substrate</name>
    </ligand>
</feature>
<gene>
    <name evidence="1" type="primary">truA2</name>
    <name type="ordered locus">CTC_02573</name>
</gene>
<proteinExistence type="inferred from homology"/>
<name>TRUA2_CLOTE</name>